<comment type="function">
    <text evidence="1">Cooperation and regulatory loops of multiple nodals are essential for mesendoderm patterning in early embryos. Plays a role in mesoderm formation and may be required for neural development (By similarity).</text>
</comment>
<comment type="subunit">
    <text evidence="2">Homodimer; disulfide-linked.</text>
</comment>
<comment type="subcellular location">
    <subcellularLocation>
        <location evidence="3">Secreted</location>
    </subcellularLocation>
</comment>
<comment type="induction">
    <text evidence="6">By dorsal mesoderm-inducing signals including activin and vegt. Not induced by wnt8 alone, but wnt8 potentiates the response to activin and vegt.</text>
</comment>
<comment type="similarity">
    <text evidence="4">Belongs to the TGF-beta family.</text>
</comment>
<accession>Q90XB8</accession>
<organism>
    <name type="scientific">Xenopus laevis</name>
    <name type="common">African clawed frog</name>
    <dbReference type="NCBI Taxonomy" id="8355"/>
    <lineage>
        <taxon>Eukaryota</taxon>
        <taxon>Metazoa</taxon>
        <taxon>Chordata</taxon>
        <taxon>Craniata</taxon>
        <taxon>Vertebrata</taxon>
        <taxon>Euteleostomi</taxon>
        <taxon>Amphibia</taxon>
        <taxon>Batrachia</taxon>
        <taxon>Anura</taxon>
        <taxon>Pipoidea</taxon>
        <taxon>Pipidae</taxon>
        <taxon>Xenopodinae</taxon>
        <taxon>Xenopus</taxon>
        <taxon>Xenopus</taxon>
    </lineage>
</organism>
<dbReference type="EMBL" id="AF410800">
    <property type="protein sequence ID" value="AAL02114.1"/>
    <property type="molecule type" value="Genomic_DNA"/>
</dbReference>
<dbReference type="GlyCosmos" id="Q90XB8">
    <property type="glycosylation" value="4 sites, No reported glycans"/>
</dbReference>
<dbReference type="AGR" id="Xenbase:XB-GENE-17339551"/>
<dbReference type="Xenbase" id="XB-GENE-17339551">
    <property type="gene designation" value="nodal.S"/>
</dbReference>
<dbReference type="Proteomes" id="UP000186698">
    <property type="component" value="Unplaced"/>
</dbReference>
<dbReference type="GO" id="GO:0005615">
    <property type="term" value="C:extracellular space"/>
    <property type="evidence" value="ECO:0000318"/>
    <property type="project" value="GO_Central"/>
</dbReference>
<dbReference type="GO" id="GO:0005125">
    <property type="term" value="F:cytokine activity"/>
    <property type="evidence" value="ECO:0000318"/>
    <property type="project" value="GO_Central"/>
</dbReference>
<dbReference type="GO" id="GO:0008083">
    <property type="term" value="F:growth factor activity"/>
    <property type="evidence" value="ECO:0007669"/>
    <property type="project" value="UniProtKB-KW"/>
</dbReference>
<dbReference type="Gene3D" id="2.10.90.10">
    <property type="entry name" value="Cystine-knot cytokines"/>
    <property type="match status" value="1"/>
</dbReference>
<dbReference type="InterPro" id="IPR029034">
    <property type="entry name" value="Cystine-knot_cytokine"/>
</dbReference>
<dbReference type="InterPro" id="IPR001839">
    <property type="entry name" value="TGF-b_C"/>
</dbReference>
<dbReference type="InterPro" id="IPR015615">
    <property type="entry name" value="TGF-beta-rel"/>
</dbReference>
<dbReference type="InterPro" id="IPR017948">
    <property type="entry name" value="TGFb_CS"/>
</dbReference>
<dbReference type="PANTHER" id="PTHR11848:SF299">
    <property type="entry name" value="NODAL HOMOLOG 4-A"/>
    <property type="match status" value="1"/>
</dbReference>
<dbReference type="PANTHER" id="PTHR11848">
    <property type="entry name" value="TGF-BETA FAMILY"/>
    <property type="match status" value="1"/>
</dbReference>
<dbReference type="Pfam" id="PF00019">
    <property type="entry name" value="TGF_beta"/>
    <property type="match status" value="1"/>
</dbReference>
<dbReference type="SMART" id="SM00204">
    <property type="entry name" value="TGFB"/>
    <property type="match status" value="1"/>
</dbReference>
<dbReference type="SUPFAM" id="SSF57501">
    <property type="entry name" value="Cystine-knot cytokines"/>
    <property type="match status" value="1"/>
</dbReference>
<dbReference type="PROSITE" id="PS00250">
    <property type="entry name" value="TGF_BETA_1"/>
    <property type="match status" value="1"/>
</dbReference>
<dbReference type="PROSITE" id="PS51362">
    <property type="entry name" value="TGF_BETA_2"/>
    <property type="match status" value="1"/>
</dbReference>
<sequence>MHLYFSCFILLFVPGGKSLGINSHLKHMSNKSQDQVNRTRTVGSKDVAALPLSSYMFNLYQSFHHSELNHGMEAAPSLSLNHRADIIRSLAVKSYDHGGSLWTFLFDFSSLSQEEEHQFAEVRFDFRAFSDAILVGMEVIVDFFHQSSTCQSISGFCQSYLYVGSLTSTLWPRSSDTWVTFEATDIIHKWFERNDKGKNHSEGHMKQPKKLHRAKSAERRYQQRSTENPQILMMVYSNISKKEKLSGTATLLQDAAHSKYLAVMPGIQTIANSRRHRRSHIFNEHIMGMKHVPSADSSRTLCRRVDFFVDFKQIGWDSWIIHPVKYNAYRCEGECPSPVNERLKPNNHAYMQ</sequence>
<gene>
    <name type="primary">nodal4-b</name>
    <name evidence="7" type="synonym">nr4</name>
</gene>
<proteinExistence type="evidence at transcript level"/>
<protein>
    <recommendedName>
        <fullName>Nodal homolog 4-B</fullName>
    </recommendedName>
    <alternativeName>
        <fullName>Nodal-related protein 4-B</fullName>
    </alternativeName>
    <alternativeName>
        <fullName>Xnr4</fullName>
    </alternativeName>
</protein>
<name>NOD4B_XENLA</name>
<reference evidence="8 9" key="1">
    <citation type="journal article" date="2002" name="Int. J. Dev. Biol.">
        <title>Multiple interactions between maternally-activated signalling pathways control Xenopus nodal-related genes.</title>
        <authorList>
            <person name="Rex M."/>
            <person name="Hilton E."/>
            <person name="Old R.W."/>
        </authorList>
    </citation>
    <scope>NUCLEOTIDE SEQUENCE [GENOMIC DNA]</scope>
    <scope>INDUCTION</scope>
</reference>
<keyword id="KW-0165">Cleavage on pair of basic residues</keyword>
<keyword id="KW-0217">Developmental protein</keyword>
<keyword id="KW-1015">Disulfide bond</keyword>
<keyword id="KW-0325">Glycoprotein</keyword>
<keyword id="KW-0339">Growth factor</keyword>
<keyword id="KW-1185">Reference proteome</keyword>
<keyword id="KW-0964">Secreted</keyword>
<keyword id="KW-0732">Signal</keyword>
<evidence type="ECO:0000250" key="1">
    <source>
        <dbReference type="UniProtKB" id="O13048"/>
    </source>
</evidence>
<evidence type="ECO:0000250" key="2">
    <source>
        <dbReference type="UniProtKB" id="P43021"/>
    </source>
</evidence>
<evidence type="ECO:0000250" key="3">
    <source>
        <dbReference type="UniProtKB" id="Q91620"/>
    </source>
</evidence>
<evidence type="ECO:0000255" key="4"/>
<evidence type="ECO:0000256" key="5">
    <source>
        <dbReference type="SAM" id="MobiDB-lite"/>
    </source>
</evidence>
<evidence type="ECO:0000269" key="6">
    <source>
    </source>
</evidence>
<evidence type="ECO:0000303" key="7">
    <source>
    </source>
</evidence>
<evidence type="ECO:0000305" key="8"/>
<evidence type="ECO:0000312" key="9">
    <source>
        <dbReference type="EMBL" id="AAL02114.1"/>
    </source>
</evidence>
<feature type="signal peptide" evidence="4">
    <location>
        <begin position="1"/>
        <end position="18"/>
    </location>
</feature>
<feature type="propeptide" id="PRO_0000334507" evidence="4">
    <location>
        <begin position="19"/>
        <end position="278"/>
    </location>
</feature>
<feature type="chain" id="PRO_0000334508" description="Nodal homolog 4-B" evidence="4">
    <location>
        <begin position="279"/>
        <end position="352" status="greater than"/>
    </location>
</feature>
<feature type="region of interest" description="Disordered" evidence="5">
    <location>
        <begin position="197"/>
        <end position="223"/>
    </location>
</feature>
<feature type="glycosylation site" description="N-linked (GlcNAc...) asparagine" evidence="4">
    <location>
        <position position="30"/>
    </location>
</feature>
<feature type="glycosylation site" description="N-linked (GlcNAc...) asparagine" evidence="4">
    <location>
        <position position="37"/>
    </location>
</feature>
<feature type="glycosylation site" description="N-linked (GlcNAc...) asparagine" evidence="4">
    <location>
        <position position="199"/>
    </location>
</feature>
<feature type="glycosylation site" description="N-linked (GlcNAc...) asparagine" evidence="4">
    <location>
        <position position="238"/>
    </location>
</feature>
<feature type="disulfide bond" evidence="2">
    <location>
        <begin position="302"/>
        <end status="unknown"/>
    </location>
</feature>
<feature type="disulfide bond" evidence="2">
    <location>
        <begin position="331"/>
        <end status="unknown"/>
    </location>
</feature>
<feature type="disulfide bond" evidence="2">
    <location>
        <begin position="335"/>
        <end status="unknown"/>
    </location>
</feature>
<feature type="non-terminal residue" evidence="9">
    <location>
        <position position="352"/>
    </location>
</feature>